<comment type="function">
    <text evidence="1">Component of the A-type ATP synthase that produces ATP from ADP in the presence of a proton gradient across the membrane.</text>
</comment>
<comment type="subunit">
    <text evidence="1">Has multiple subunits with at least A(3), B(3), C, D, E, F, H, I and proteolipid K(x).</text>
</comment>
<comment type="subcellular location">
    <subcellularLocation>
        <location evidence="1">Cell membrane</location>
        <topology evidence="1">Peripheral membrane protein</topology>
    </subcellularLocation>
</comment>
<comment type="similarity">
    <text evidence="1">Belongs to the V-ATPase E subunit family.</text>
</comment>
<evidence type="ECO:0000255" key="1">
    <source>
        <dbReference type="HAMAP-Rule" id="MF_00311"/>
    </source>
</evidence>
<reference key="1">
    <citation type="journal article" date="2009" name="Proc. Natl. Acad. Sci. U.S.A.">
        <title>Biogeography of the Sulfolobus islandicus pan-genome.</title>
        <authorList>
            <person name="Reno M.L."/>
            <person name="Held N.L."/>
            <person name="Fields C.J."/>
            <person name="Burke P.V."/>
            <person name="Whitaker R.J."/>
        </authorList>
    </citation>
    <scope>NUCLEOTIDE SEQUENCE [LARGE SCALE GENOMIC DNA]</scope>
    <source>
        <strain>M.16.27</strain>
    </source>
</reference>
<keyword id="KW-0066">ATP synthesis</keyword>
<keyword id="KW-1003">Cell membrane</keyword>
<keyword id="KW-0375">Hydrogen ion transport</keyword>
<keyword id="KW-0406">Ion transport</keyword>
<keyword id="KW-0472">Membrane</keyword>
<keyword id="KW-0813">Transport</keyword>
<feature type="chain" id="PRO_1000205051" description="A-type ATP synthase subunit E">
    <location>
        <begin position="1"/>
        <end position="194"/>
    </location>
</feature>
<sequence>MDFEQLLDKSLNKVREEIKTELSKSLDEAIKLLNEGHTKIIQEYTQRINELITKTKEEIEGEKARLEVENKRTLLVEKEYWINKVYERVLEKIGEVVKTKEYKDAIQSILNKEIKEMEGEKITVYCSPNDKSTVEKVVGNNKNVTIKTDDKMLGGIRIYYEGSGLTRDFSLKLILDQVFDSMRGKISDMLFGGK</sequence>
<organism>
    <name type="scientific">Saccharolobus islandicus (strain M.16.27)</name>
    <name type="common">Sulfolobus islandicus</name>
    <dbReference type="NCBI Taxonomy" id="427318"/>
    <lineage>
        <taxon>Archaea</taxon>
        <taxon>Thermoproteota</taxon>
        <taxon>Thermoprotei</taxon>
        <taxon>Sulfolobales</taxon>
        <taxon>Sulfolobaceae</taxon>
        <taxon>Saccharolobus</taxon>
    </lineage>
</organism>
<name>AATE_SACI3</name>
<proteinExistence type="inferred from homology"/>
<gene>
    <name evidence="1" type="primary">atpE</name>
    <name type="ordered locus">M1627_1683</name>
</gene>
<accession>C3N6D6</accession>
<dbReference type="EMBL" id="CP001401">
    <property type="protein sequence ID" value="ACP55561.1"/>
    <property type="molecule type" value="Genomic_DNA"/>
</dbReference>
<dbReference type="RefSeq" id="WP_012711560.1">
    <property type="nucleotide sequence ID" value="NC_012632.1"/>
</dbReference>
<dbReference type="SMR" id="C3N6D6"/>
<dbReference type="KEGG" id="sim:M1627_1683"/>
<dbReference type="HOGENOM" id="CLU_1412391_0_0_2"/>
<dbReference type="Proteomes" id="UP000002307">
    <property type="component" value="Chromosome"/>
</dbReference>
<dbReference type="GO" id="GO:0005886">
    <property type="term" value="C:plasma membrane"/>
    <property type="evidence" value="ECO:0007669"/>
    <property type="project" value="UniProtKB-SubCell"/>
</dbReference>
<dbReference type="GO" id="GO:0033178">
    <property type="term" value="C:proton-transporting two-sector ATPase complex, catalytic domain"/>
    <property type="evidence" value="ECO:0007669"/>
    <property type="project" value="InterPro"/>
</dbReference>
<dbReference type="GO" id="GO:0005524">
    <property type="term" value="F:ATP binding"/>
    <property type="evidence" value="ECO:0007669"/>
    <property type="project" value="UniProtKB-UniRule"/>
</dbReference>
<dbReference type="GO" id="GO:0046933">
    <property type="term" value="F:proton-transporting ATP synthase activity, rotational mechanism"/>
    <property type="evidence" value="ECO:0007669"/>
    <property type="project" value="UniProtKB-UniRule"/>
</dbReference>
<dbReference type="GO" id="GO:0046961">
    <property type="term" value="F:proton-transporting ATPase activity, rotational mechanism"/>
    <property type="evidence" value="ECO:0007669"/>
    <property type="project" value="InterPro"/>
</dbReference>
<dbReference type="GO" id="GO:0042777">
    <property type="term" value="P:proton motive force-driven plasma membrane ATP synthesis"/>
    <property type="evidence" value="ECO:0007669"/>
    <property type="project" value="UniProtKB-UniRule"/>
</dbReference>
<dbReference type="Gene3D" id="3.30.2320.30">
    <property type="entry name" value="ATP synthase, E subunit, C-terminal"/>
    <property type="match status" value="1"/>
</dbReference>
<dbReference type="HAMAP" id="MF_00311">
    <property type="entry name" value="ATP_synth_E_arch"/>
    <property type="match status" value="1"/>
</dbReference>
<dbReference type="InterPro" id="IPR038495">
    <property type="entry name" value="ATPase_E_C"/>
</dbReference>
<dbReference type="InterPro" id="IPR002842">
    <property type="entry name" value="ATPase_V1_Esu"/>
</dbReference>
<dbReference type="Pfam" id="PF01991">
    <property type="entry name" value="vATP-synt_E"/>
    <property type="match status" value="1"/>
</dbReference>
<dbReference type="SUPFAM" id="SSF160527">
    <property type="entry name" value="V-type ATPase subunit E-like"/>
    <property type="match status" value="1"/>
</dbReference>
<protein>
    <recommendedName>
        <fullName evidence="1">A-type ATP synthase subunit E</fullName>
    </recommendedName>
</protein>